<keyword id="KW-1003">Cell membrane</keyword>
<keyword id="KW-0210">Decarboxylase</keyword>
<keyword id="KW-0444">Lipid biosynthesis</keyword>
<keyword id="KW-0443">Lipid metabolism</keyword>
<keyword id="KW-0456">Lyase</keyword>
<keyword id="KW-0472">Membrane</keyword>
<keyword id="KW-0594">Phospholipid biosynthesis</keyword>
<keyword id="KW-1208">Phospholipid metabolism</keyword>
<keyword id="KW-0670">Pyruvate</keyword>
<keyword id="KW-0865">Zymogen</keyword>
<protein>
    <recommendedName>
        <fullName evidence="1">Phosphatidylserine decarboxylase proenzyme</fullName>
        <ecNumber evidence="1">4.1.1.65</ecNumber>
    </recommendedName>
    <component>
        <recommendedName>
            <fullName evidence="1">Phosphatidylserine decarboxylase alpha chain</fullName>
        </recommendedName>
    </component>
    <component>
        <recommendedName>
            <fullName evidence="1">Phosphatidylserine decarboxylase beta chain</fullName>
        </recommendedName>
    </component>
</protein>
<organism>
    <name type="scientific">Acinetobacter baumannii (strain ATCC 17978 / DSM 105126 / CIP 53.77 / LMG 1025 / NCDC KC755 / 5377)</name>
    <dbReference type="NCBI Taxonomy" id="400667"/>
    <lineage>
        <taxon>Bacteria</taxon>
        <taxon>Pseudomonadati</taxon>
        <taxon>Pseudomonadota</taxon>
        <taxon>Gammaproteobacteria</taxon>
        <taxon>Moraxellales</taxon>
        <taxon>Moraxellaceae</taxon>
        <taxon>Acinetobacter</taxon>
        <taxon>Acinetobacter calcoaceticus/baumannii complex</taxon>
    </lineage>
</organism>
<dbReference type="EC" id="4.1.1.65" evidence="1"/>
<dbReference type="EMBL" id="CP000521">
    <property type="protein sequence ID" value="ABO13767.2"/>
    <property type="molecule type" value="Genomic_DNA"/>
</dbReference>
<dbReference type="SMR" id="A3MA23"/>
<dbReference type="KEGG" id="acb:A1S_3378"/>
<dbReference type="HOGENOM" id="CLU_029061_4_1_6"/>
<dbReference type="UniPathway" id="UPA00558">
    <property type="reaction ID" value="UER00616"/>
</dbReference>
<dbReference type="GO" id="GO:0005886">
    <property type="term" value="C:plasma membrane"/>
    <property type="evidence" value="ECO:0007669"/>
    <property type="project" value="UniProtKB-SubCell"/>
</dbReference>
<dbReference type="GO" id="GO:0004609">
    <property type="term" value="F:phosphatidylserine decarboxylase activity"/>
    <property type="evidence" value="ECO:0007669"/>
    <property type="project" value="UniProtKB-UniRule"/>
</dbReference>
<dbReference type="GO" id="GO:0006646">
    <property type="term" value="P:phosphatidylethanolamine biosynthetic process"/>
    <property type="evidence" value="ECO:0007669"/>
    <property type="project" value="UniProtKB-UniRule"/>
</dbReference>
<dbReference type="HAMAP" id="MF_00662">
    <property type="entry name" value="PS_decarb_PSD_B_type1"/>
    <property type="match status" value="1"/>
</dbReference>
<dbReference type="InterPro" id="IPR003817">
    <property type="entry name" value="PS_Dcarbxylase"/>
</dbReference>
<dbReference type="InterPro" id="IPR033177">
    <property type="entry name" value="PSD-B"/>
</dbReference>
<dbReference type="InterPro" id="IPR033178">
    <property type="entry name" value="PSD_type1_pro"/>
</dbReference>
<dbReference type="NCBIfam" id="TIGR00163">
    <property type="entry name" value="PS_decarb"/>
    <property type="match status" value="1"/>
</dbReference>
<dbReference type="PANTHER" id="PTHR10067">
    <property type="entry name" value="PHOSPHATIDYLSERINE DECARBOXYLASE"/>
    <property type="match status" value="1"/>
</dbReference>
<dbReference type="PANTHER" id="PTHR10067:SF6">
    <property type="entry name" value="PHOSPHATIDYLSERINE DECARBOXYLASE PROENZYME, MITOCHONDRIAL"/>
    <property type="match status" value="1"/>
</dbReference>
<dbReference type="Pfam" id="PF02666">
    <property type="entry name" value="PS_Dcarbxylase"/>
    <property type="match status" value="1"/>
</dbReference>
<name>PSD_ACIBT</name>
<gene>
    <name evidence="1" type="primary">psd</name>
    <name type="ordered locus">A1S_3378</name>
</gene>
<accession>A3MA23</accession>
<feature type="chain" id="PRO_1000131324" description="Phosphatidylserine decarboxylase beta chain" evidence="1">
    <location>
        <begin position="1"/>
        <end position="249"/>
    </location>
</feature>
<feature type="chain" id="PRO_1000131325" description="Phosphatidylserine decarboxylase alpha chain" evidence="1">
    <location>
        <begin position="250"/>
        <end position="283"/>
    </location>
</feature>
<feature type="active site" description="Charge relay system; for autoendoproteolytic cleavage activity" evidence="1">
    <location>
        <position position="96"/>
    </location>
</feature>
<feature type="active site" description="Charge relay system; for autoendoproteolytic cleavage activity" evidence="1">
    <location>
        <position position="152"/>
    </location>
</feature>
<feature type="active site" description="Charge relay system; for autoendoproteolytic cleavage activity" evidence="1">
    <location>
        <position position="250"/>
    </location>
</feature>
<feature type="active site" description="Schiff-base intermediate with substrate; via pyruvic acid; for decarboxylase activity" evidence="1">
    <location>
        <position position="250"/>
    </location>
</feature>
<feature type="site" description="Cleavage (non-hydrolytic); by autocatalysis" evidence="1">
    <location>
        <begin position="249"/>
        <end position="250"/>
    </location>
</feature>
<feature type="modified residue" description="Pyruvic acid (Ser); by autocatalysis" evidence="1">
    <location>
        <position position="250"/>
    </location>
</feature>
<comment type="function">
    <text evidence="1">Catalyzes the formation of phosphatidylethanolamine (PtdEtn) from phosphatidylserine (PtdSer).</text>
</comment>
<comment type="catalytic activity">
    <reaction evidence="1">
        <text>a 1,2-diacyl-sn-glycero-3-phospho-L-serine + H(+) = a 1,2-diacyl-sn-glycero-3-phosphoethanolamine + CO2</text>
        <dbReference type="Rhea" id="RHEA:20828"/>
        <dbReference type="ChEBI" id="CHEBI:15378"/>
        <dbReference type="ChEBI" id="CHEBI:16526"/>
        <dbReference type="ChEBI" id="CHEBI:57262"/>
        <dbReference type="ChEBI" id="CHEBI:64612"/>
        <dbReference type="EC" id="4.1.1.65"/>
    </reaction>
</comment>
<comment type="cofactor">
    <cofactor evidence="1">
        <name>pyruvate</name>
        <dbReference type="ChEBI" id="CHEBI:15361"/>
    </cofactor>
    <text evidence="1">Binds 1 pyruvoyl group covalently per subunit.</text>
</comment>
<comment type="pathway">
    <text evidence="1">Phospholipid metabolism; phosphatidylethanolamine biosynthesis; phosphatidylethanolamine from CDP-diacylglycerol: step 2/2.</text>
</comment>
<comment type="subunit">
    <text evidence="1">Heterodimer of a large membrane-associated beta subunit and a small pyruvoyl-containing alpha subunit.</text>
</comment>
<comment type="subcellular location">
    <subcellularLocation>
        <location evidence="1">Cell membrane</location>
        <topology evidence="1">Peripheral membrane protein</topology>
    </subcellularLocation>
</comment>
<comment type="PTM">
    <text evidence="1">Is synthesized initially as an inactive proenzyme. Formation of the active enzyme involves a self-maturation process in which the active site pyruvoyl group is generated from an internal serine residue via an autocatalytic post-translational modification. Two non-identical subunits are generated from the proenzyme in this reaction, and the pyruvate is formed at the N-terminus of the alpha chain, which is derived from the carboxyl end of the proenzyme. The autoendoproteolytic cleavage occurs by a canonical serine protease mechanism, in which the side chain hydroxyl group of the serine supplies its oxygen atom to form the C-terminus of the beta chain, while the remainder of the serine residue undergoes an oxidative deamination to produce ammonia and the pyruvoyl prosthetic group on the alpha chain. During this reaction, the Ser that is part of the protease active site of the proenzyme becomes the pyruvoyl prosthetic group, which constitutes an essential element of the active site of the mature decarboxylase.</text>
</comment>
<comment type="similarity">
    <text evidence="1">Belongs to the phosphatidylserine decarboxylase family. PSD-B subfamily. Prokaryotic type I sub-subfamily.</text>
</comment>
<reference key="1">
    <citation type="journal article" date="2007" name="Genes Dev.">
        <title>New insights into Acinetobacter baumannii pathogenesis revealed by high-density pyrosequencing and transposon mutagenesis.</title>
        <authorList>
            <person name="Smith M.G."/>
            <person name="Gianoulis T.A."/>
            <person name="Pukatzki S."/>
            <person name="Mekalanos J.J."/>
            <person name="Ornston L.N."/>
            <person name="Gerstein M."/>
            <person name="Snyder M."/>
        </authorList>
    </citation>
    <scope>NUCLEOTIDE SEQUENCE [LARGE SCALE GENOMIC DNA]</scope>
    <source>
        <strain>ATCC 17978 / DSM 105126 / CIP 53.77 / LMG 1025 / NCDC KC755 / 5377</strain>
    </source>
</reference>
<sequence>MSFTSRLKKELFIKAQNLVPQHQLSRVVGKVAASENPILKAAVIHAFKTKYGIDLSIAEQGNALKYKSFNDFFTRALKDGVRLVDENPDSIVSPADGAISQIGKITAGEVFQAKGQSFSVEKLIGDPQLAQPFQEGEFATVYLSPRDYHRVHMPFSGTLTETLYVPGELFSVNQVTAENVPGLFARNERMVCLFDTELGRMAVVLVGAMIVAGIETVATGKVKPSGRIELQHHELKLEKGAELGRFYLGSTAIILFEKDKIEWEKRYKAESVVVMGERMGHTL</sequence>
<proteinExistence type="inferred from homology"/>
<evidence type="ECO:0000255" key="1">
    <source>
        <dbReference type="HAMAP-Rule" id="MF_00662"/>
    </source>
</evidence>